<reference key="1">
    <citation type="journal article" date="2009" name="BMC Genomics">
        <title>Analysis of the Rickettsia africae genome reveals that virulence acquisition in Rickettsia species may be explained by genome reduction.</title>
        <authorList>
            <person name="Fournier P.-E."/>
            <person name="El Karkouri K."/>
            <person name="Leroy Q."/>
            <person name="Robert C."/>
            <person name="Giumelli B."/>
            <person name="Renesto P."/>
            <person name="Socolovschi C."/>
            <person name="Parola P."/>
            <person name="Audic S."/>
            <person name="Raoult D."/>
        </authorList>
    </citation>
    <scope>NUCLEOTIDE SEQUENCE [LARGE SCALE GENOMIC DNA]</scope>
    <source>
        <strain>ESF-5</strain>
    </source>
</reference>
<accession>C3PMJ1</accession>
<dbReference type="EC" id="6.3.5.-" evidence="1"/>
<dbReference type="EMBL" id="CP001612">
    <property type="protein sequence ID" value="ACP53151.1"/>
    <property type="molecule type" value="Genomic_DNA"/>
</dbReference>
<dbReference type="RefSeq" id="WP_012719421.1">
    <property type="nucleotide sequence ID" value="NC_012633.1"/>
</dbReference>
<dbReference type="SMR" id="C3PMJ1"/>
<dbReference type="KEGG" id="raf:RAF_ORF0184"/>
<dbReference type="HOGENOM" id="CLU_105899_2_0_5"/>
<dbReference type="Proteomes" id="UP000002305">
    <property type="component" value="Chromosome"/>
</dbReference>
<dbReference type="GO" id="GO:0050566">
    <property type="term" value="F:asparaginyl-tRNA synthase (glutamine-hydrolyzing) activity"/>
    <property type="evidence" value="ECO:0007669"/>
    <property type="project" value="RHEA"/>
</dbReference>
<dbReference type="GO" id="GO:0005524">
    <property type="term" value="F:ATP binding"/>
    <property type="evidence" value="ECO:0007669"/>
    <property type="project" value="UniProtKB-KW"/>
</dbReference>
<dbReference type="GO" id="GO:0050567">
    <property type="term" value="F:glutaminyl-tRNA synthase (glutamine-hydrolyzing) activity"/>
    <property type="evidence" value="ECO:0007669"/>
    <property type="project" value="UniProtKB-UniRule"/>
</dbReference>
<dbReference type="GO" id="GO:0070681">
    <property type="term" value="P:glutaminyl-tRNAGln biosynthesis via transamidation"/>
    <property type="evidence" value="ECO:0007669"/>
    <property type="project" value="TreeGrafter"/>
</dbReference>
<dbReference type="GO" id="GO:0006450">
    <property type="term" value="P:regulation of translational fidelity"/>
    <property type="evidence" value="ECO:0007669"/>
    <property type="project" value="InterPro"/>
</dbReference>
<dbReference type="GO" id="GO:0006412">
    <property type="term" value="P:translation"/>
    <property type="evidence" value="ECO:0007669"/>
    <property type="project" value="UniProtKB-UniRule"/>
</dbReference>
<dbReference type="Gene3D" id="1.10.20.60">
    <property type="entry name" value="Glu-tRNAGln amidotransferase C subunit, N-terminal domain"/>
    <property type="match status" value="1"/>
</dbReference>
<dbReference type="HAMAP" id="MF_00122">
    <property type="entry name" value="GatC"/>
    <property type="match status" value="1"/>
</dbReference>
<dbReference type="InterPro" id="IPR036113">
    <property type="entry name" value="Asp/Glu-ADT_sf_sub_c"/>
</dbReference>
<dbReference type="InterPro" id="IPR003837">
    <property type="entry name" value="GatC"/>
</dbReference>
<dbReference type="NCBIfam" id="TIGR00135">
    <property type="entry name" value="gatC"/>
    <property type="match status" value="1"/>
</dbReference>
<dbReference type="PANTHER" id="PTHR15004">
    <property type="entry name" value="GLUTAMYL-TRNA(GLN) AMIDOTRANSFERASE SUBUNIT C, MITOCHONDRIAL"/>
    <property type="match status" value="1"/>
</dbReference>
<dbReference type="PANTHER" id="PTHR15004:SF0">
    <property type="entry name" value="GLUTAMYL-TRNA(GLN) AMIDOTRANSFERASE SUBUNIT C, MITOCHONDRIAL"/>
    <property type="match status" value="1"/>
</dbReference>
<dbReference type="Pfam" id="PF02686">
    <property type="entry name" value="GatC"/>
    <property type="match status" value="1"/>
</dbReference>
<dbReference type="SUPFAM" id="SSF141000">
    <property type="entry name" value="Glu-tRNAGln amidotransferase C subunit"/>
    <property type="match status" value="1"/>
</dbReference>
<proteinExistence type="inferred from homology"/>
<gene>
    <name evidence="1" type="primary">gatC</name>
    <name type="ordered locus">RAF_ORF0184</name>
</gene>
<protein>
    <recommendedName>
        <fullName evidence="1">Aspartyl/glutamyl-tRNA(Asn/Gln) amidotransferase subunit C</fullName>
        <shortName evidence="1">Asp/Glu-ADT subunit C</shortName>
        <ecNumber evidence="1">6.3.5.-</ecNumber>
    </recommendedName>
</protein>
<name>GATC_RICAE</name>
<comment type="function">
    <text evidence="1">Allows the formation of correctly charged Asn-tRNA(Asn) or Gln-tRNA(Gln) through the transamidation of misacylated Asp-tRNA(Asn) or Glu-tRNA(Gln) in organisms which lack either or both of asparaginyl-tRNA or glutaminyl-tRNA synthetases. The reaction takes place in the presence of glutamine and ATP through an activated phospho-Asp-tRNA(Asn) or phospho-Glu-tRNA(Gln).</text>
</comment>
<comment type="catalytic activity">
    <reaction evidence="1">
        <text>L-glutamyl-tRNA(Gln) + L-glutamine + ATP + H2O = L-glutaminyl-tRNA(Gln) + L-glutamate + ADP + phosphate + H(+)</text>
        <dbReference type="Rhea" id="RHEA:17521"/>
        <dbReference type="Rhea" id="RHEA-COMP:9681"/>
        <dbReference type="Rhea" id="RHEA-COMP:9684"/>
        <dbReference type="ChEBI" id="CHEBI:15377"/>
        <dbReference type="ChEBI" id="CHEBI:15378"/>
        <dbReference type="ChEBI" id="CHEBI:29985"/>
        <dbReference type="ChEBI" id="CHEBI:30616"/>
        <dbReference type="ChEBI" id="CHEBI:43474"/>
        <dbReference type="ChEBI" id="CHEBI:58359"/>
        <dbReference type="ChEBI" id="CHEBI:78520"/>
        <dbReference type="ChEBI" id="CHEBI:78521"/>
        <dbReference type="ChEBI" id="CHEBI:456216"/>
    </reaction>
</comment>
<comment type="catalytic activity">
    <reaction evidence="1">
        <text>L-aspartyl-tRNA(Asn) + L-glutamine + ATP + H2O = L-asparaginyl-tRNA(Asn) + L-glutamate + ADP + phosphate + 2 H(+)</text>
        <dbReference type="Rhea" id="RHEA:14513"/>
        <dbReference type="Rhea" id="RHEA-COMP:9674"/>
        <dbReference type="Rhea" id="RHEA-COMP:9677"/>
        <dbReference type="ChEBI" id="CHEBI:15377"/>
        <dbReference type="ChEBI" id="CHEBI:15378"/>
        <dbReference type="ChEBI" id="CHEBI:29985"/>
        <dbReference type="ChEBI" id="CHEBI:30616"/>
        <dbReference type="ChEBI" id="CHEBI:43474"/>
        <dbReference type="ChEBI" id="CHEBI:58359"/>
        <dbReference type="ChEBI" id="CHEBI:78515"/>
        <dbReference type="ChEBI" id="CHEBI:78516"/>
        <dbReference type="ChEBI" id="CHEBI:456216"/>
    </reaction>
</comment>
<comment type="subunit">
    <text evidence="1">Heterotrimer of A, B and C subunits.</text>
</comment>
<comment type="similarity">
    <text evidence="1">Belongs to the GatC family.</text>
</comment>
<organism>
    <name type="scientific">Rickettsia africae (strain ESF-5)</name>
    <dbReference type="NCBI Taxonomy" id="347255"/>
    <lineage>
        <taxon>Bacteria</taxon>
        <taxon>Pseudomonadati</taxon>
        <taxon>Pseudomonadota</taxon>
        <taxon>Alphaproteobacteria</taxon>
        <taxon>Rickettsiales</taxon>
        <taxon>Rickettsiaceae</taxon>
        <taxon>Rickettsieae</taxon>
        <taxon>Rickettsia</taxon>
        <taxon>spotted fever group</taxon>
    </lineage>
</organism>
<keyword id="KW-0067">ATP-binding</keyword>
<keyword id="KW-0436">Ligase</keyword>
<keyword id="KW-0547">Nucleotide-binding</keyword>
<keyword id="KW-0648">Protein biosynthesis</keyword>
<evidence type="ECO:0000255" key="1">
    <source>
        <dbReference type="HAMAP-Rule" id="MF_00122"/>
    </source>
</evidence>
<sequence>MITKEEAQKIAKLARLKFEEDTVEKFFTQLSTIMDMIDILNEIDCKDIEPLTSVCNMNARMREDAVTSSDLSSELFDNVSGNSTQLAKEVKYFITPKVVE</sequence>
<feature type="chain" id="PRO_1000203077" description="Aspartyl/glutamyl-tRNA(Asn/Gln) amidotransferase subunit C">
    <location>
        <begin position="1"/>
        <end position="100"/>
    </location>
</feature>